<feature type="chain" id="PRO_1000204688" description="UPF0127 protein TGAM_1372">
    <location>
        <begin position="1"/>
        <end position="153"/>
    </location>
</feature>
<proteinExistence type="inferred from homology"/>
<name>Y1372_THEGJ</name>
<reference key="1">
    <citation type="journal article" date="2007" name="Genome Biol.">
        <title>Genome analysis and genome-wide proteomics of Thermococcus gammatolerans, the most radioresistant organism known amongst the Archaea.</title>
        <authorList>
            <person name="Zivanovic Y."/>
            <person name="Armengaud J."/>
            <person name="Lagorce A."/>
            <person name="Leplat C."/>
            <person name="Guerin P."/>
            <person name="Dutertre M."/>
            <person name="Anthouard V."/>
            <person name="Forterre P."/>
            <person name="Wincker P."/>
            <person name="Confalonieri F."/>
        </authorList>
    </citation>
    <scope>NUCLEOTIDE SEQUENCE [LARGE SCALE GENOMIC DNA]</scope>
    <source>
        <strain>DSM 15229 / JCM 11827 / EJ3</strain>
    </source>
</reference>
<keyword id="KW-1185">Reference proteome</keyword>
<gene>
    <name type="ordered locus">TGAM_1372</name>
</gene>
<sequence>MIINETKGRVWHGHVELADTFIKRFRGLMLVSNVNHALIFVLPIENRLNASIHMFFMLSDIDVIWLDSMRRVVDFKTARRWRIYTPKESARYVIEGPVGLIRTLDVEEGDLISWDVTEKKEKSVPVKVSFPGKISFENERNTVVFSKDIIELP</sequence>
<evidence type="ECO:0000255" key="1">
    <source>
        <dbReference type="HAMAP-Rule" id="MF_00263"/>
    </source>
</evidence>
<accession>C5A6L2</accession>
<comment type="similarity">
    <text evidence="1">Belongs to the UPF0127 family.</text>
</comment>
<dbReference type="EMBL" id="CP001398">
    <property type="protein sequence ID" value="ACS33874.1"/>
    <property type="molecule type" value="Genomic_DNA"/>
</dbReference>
<dbReference type="RefSeq" id="WP_015858986.1">
    <property type="nucleotide sequence ID" value="NC_012804.1"/>
</dbReference>
<dbReference type="SMR" id="C5A6L2"/>
<dbReference type="STRING" id="593117.TGAM_1372"/>
<dbReference type="PaxDb" id="593117-TGAM_1372"/>
<dbReference type="GeneID" id="7988105"/>
<dbReference type="KEGG" id="tga:TGAM_1372"/>
<dbReference type="PATRIC" id="fig|593117.10.peg.1372"/>
<dbReference type="eggNOG" id="arCOG03113">
    <property type="taxonomic scope" value="Archaea"/>
</dbReference>
<dbReference type="HOGENOM" id="CLU_097039_4_2_2"/>
<dbReference type="OrthoDB" id="64208at2157"/>
<dbReference type="Proteomes" id="UP000001488">
    <property type="component" value="Chromosome"/>
</dbReference>
<dbReference type="Gene3D" id="2.60.120.1140">
    <property type="entry name" value="Protein of unknown function DUF192"/>
    <property type="match status" value="1"/>
</dbReference>
<dbReference type="HAMAP" id="MF_00263">
    <property type="entry name" value="UPF0127"/>
    <property type="match status" value="1"/>
</dbReference>
<dbReference type="InterPro" id="IPR003795">
    <property type="entry name" value="DUF192"/>
</dbReference>
<dbReference type="InterPro" id="IPR038695">
    <property type="entry name" value="Saro_0823-like_sf"/>
</dbReference>
<dbReference type="InterPro" id="IPR022906">
    <property type="entry name" value="UPF0127"/>
</dbReference>
<dbReference type="NCBIfam" id="NF002996">
    <property type="entry name" value="PRK03760.1"/>
    <property type="match status" value="1"/>
</dbReference>
<dbReference type="Pfam" id="PF02643">
    <property type="entry name" value="DUF192"/>
    <property type="match status" value="1"/>
</dbReference>
<protein>
    <recommendedName>
        <fullName evidence="1">UPF0127 protein TGAM_1372</fullName>
    </recommendedName>
</protein>
<organism>
    <name type="scientific">Thermococcus gammatolerans (strain DSM 15229 / JCM 11827 / EJ3)</name>
    <dbReference type="NCBI Taxonomy" id="593117"/>
    <lineage>
        <taxon>Archaea</taxon>
        <taxon>Methanobacteriati</taxon>
        <taxon>Methanobacteriota</taxon>
        <taxon>Thermococci</taxon>
        <taxon>Thermococcales</taxon>
        <taxon>Thermococcaceae</taxon>
        <taxon>Thermococcus</taxon>
    </lineage>
</organism>